<protein>
    <recommendedName>
        <fullName evidence="1">UDP-N-acetylglucosamine 1-carboxyvinyltransferase</fullName>
        <ecNumber evidence="1">2.5.1.7</ecNumber>
    </recommendedName>
    <alternativeName>
        <fullName evidence="1">Enoylpyruvate transferase</fullName>
    </alternativeName>
    <alternativeName>
        <fullName evidence="1">UDP-N-acetylglucosamine enolpyruvyl transferase</fullName>
        <shortName evidence="1">EPT</shortName>
    </alternativeName>
</protein>
<reference key="1">
    <citation type="journal article" date="2006" name="BMC Genomics">
        <title>Complete genome sequence of Shigella flexneri 5b and comparison with Shigella flexneri 2a.</title>
        <authorList>
            <person name="Nie H."/>
            <person name="Yang F."/>
            <person name="Zhang X."/>
            <person name="Yang J."/>
            <person name="Chen L."/>
            <person name="Wang J."/>
            <person name="Xiong Z."/>
            <person name="Peng J."/>
            <person name="Sun L."/>
            <person name="Dong J."/>
            <person name="Xue Y."/>
            <person name="Xu X."/>
            <person name="Chen S."/>
            <person name="Yao Z."/>
            <person name="Shen Y."/>
            <person name="Jin Q."/>
        </authorList>
    </citation>
    <scope>NUCLEOTIDE SEQUENCE [LARGE SCALE GENOMIC DNA]</scope>
    <source>
        <strain>8401</strain>
    </source>
</reference>
<comment type="function">
    <text evidence="1">Cell wall formation. Adds enolpyruvyl to UDP-N-acetylglucosamine.</text>
</comment>
<comment type="catalytic activity">
    <reaction evidence="1">
        <text>phosphoenolpyruvate + UDP-N-acetyl-alpha-D-glucosamine = UDP-N-acetyl-3-O-(1-carboxyvinyl)-alpha-D-glucosamine + phosphate</text>
        <dbReference type="Rhea" id="RHEA:18681"/>
        <dbReference type="ChEBI" id="CHEBI:43474"/>
        <dbReference type="ChEBI" id="CHEBI:57705"/>
        <dbReference type="ChEBI" id="CHEBI:58702"/>
        <dbReference type="ChEBI" id="CHEBI:68483"/>
        <dbReference type="EC" id="2.5.1.7"/>
    </reaction>
</comment>
<comment type="pathway">
    <text evidence="1">Cell wall biogenesis; peptidoglycan biosynthesis.</text>
</comment>
<comment type="subcellular location">
    <subcellularLocation>
        <location evidence="1">Cytoplasm</location>
    </subcellularLocation>
</comment>
<comment type="similarity">
    <text evidence="1">Belongs to the EPSP synthase family. MurA subfamily.</text>
</comment>
<accession>Q0T095</accession>
<keyword id="KW-0131">Cell cycle</keyword>
<keyword id="KW-0132">Cell division</keyword>
<keyword id="KW-0133">Cell shape</keyword>
<keyword id="KW-0961">Cell wall biogenesis/degradation</keyword>
<keyword id="KW-0963">Cytoplasm</keyword>
<keyword id="KW-0573">Peptidoglycan synthesis</keyword>
<keyword id="KW-0670">Pyruvate</keyword>
<keyword id="KW-0808">Transferase</keyword>
<dbReference type="EC" id="2.5.1.7" evidence="1"/>
<dbReference type="EMBL" id="CP000266">
    <property type="protein sequence ID" value="ABF05270.1"/>
    <property type="molecule type" value="Genomic_DNA"/>
</dbReference>
<dbReference type="RefSeq" id="WP_000357259.1">
    <property type="nucleotide sequence ID" value="NC_008258.1"/>
</dbReference>
<dbReference type="SMR" id="Q0T095"/>
<dbReference type="GeneID" id="93778792"/>
<dbReference type="KEGG" id="sfv:SFV_3219"/>
<dbReference type="HOGENOM" id="CLU_027387_0_0_6"/>
<dbReference type="UniPathway" id="UPA00219"/>
<dbReference type="Proteomes" id="UP000000659">
    <property type="component" value="Chromosome"/>
</dbReference>
<dbReference type="GO" id="GO:0005737">
    <property type="term" value="C:cytoplasm"/>
    <property type="evidence" value="ECO:0007669"/>
    <property type="project" value="UniProtKB-SubCell"/>
</dbReference>
<dbReference type="GO" id="GO:0008760">
    <property type="term" value="F:UDP-N-acetylglucosamine 1-carboxyvinyltransferase activity"/>
    <property type="evidence" value="ECO:0007669"/>
    <property type="project" value="UniProtKB-UniRule"/>
</dbReference>
<dbReference type="GO" id="GO:0051301">
    <property type="term" value="P:cell division"/>
    <property type="evidence" value="ECO:0007669"/>
    <property type="project" value="UniProtKB-KW"/>
</dbReference>
<dbReference type="GO" id="GO:0071555">
    <property type="term" value="P:cell wall organization"/>
    <property type="evidence" value="ECO:0007669"/>
    <property type="project" value="UniProtKB-KW"/>
</dbReference>
<dbReference type="GO" id="GO:0009252">
    <property type="term" value="P:peptidoglycan biosynthetic process"/>
    <property type="evidence" value="ECO:0007669"/>
    <property type="project" value="UniProtKB-UniRule"/>
</dbReference>
<dbReference type="GO" id="GO:0008360">
    <property type="term" value="P:regulation of cell shape"/>
    <property type="evidence" value="ECO:0007669"/>
    <property type="project" value="UniProtKB-KW"/>
</dbReference>
<dbReference type="GO" id="GO:0019277">
    <property type="term" value="P:UDP-N-acetylgalactosamine biosynthetic process"/>
    <property type="evidence" value="ECO:0007669"/>
    <property type="project" value="InterPro"/>
</dbReference>
<dbReference type="CDD" id="cd01555">
    <property type="entry name" value="UdpNAET"/>
    <property type="match status" value="1"/>
</dbReference>
<dbReference type="FunFam" id="3.65.10.10:FF:000002">
    <property type="entry name" value="UDP-N-acetylglucosamine 1-carboxyvinyltransferase"/>
    <property type="match status" value="1"/>
</dbReference>
<dbReference type="Gene3D" id="3.65.10.10">
    <property type="entry name" value="Enolpyruvate transferase domain"/>
    <property type="match status" value="2"/>
</dbReference>
<dbReference type="HAMAP" id="MF_00111">
    <property type="entry name" value="MurA"/>
    <property type="match status" value="1"/>
</dbReference>
<dbReference type="InterPro" id="IPR001986">
    <property type="entry name" value="Enolpyruvate_Tfrase_dom"/>
</dbReference>
<dbReference type="InterPro" id="IPR036968">
    <property type="entry name" value="Enolpyruvate_Tfrase_sf"/>
</dbReference>
<dbReference type="InterPro" id="IPR050068">
    <property type="entry name" value="MurA_subfamily"/>
</dbReference>
<dbReference type="InterPro" id="IPR013792">
    <property type="entry name" value="RNA3'P_cycl/enolpyr_Trfase_a/b"/>
</dbReference>
<dbReference type="InterPro" id="IPR005750">
    <property type="entry name" value="UDP_GlcNAc_COvinyl_MurA"/>
</dbReference>
<dbReference type="NCBIfam" id="TIGR01072">
    <property type="entry name" value="murA"/>
    <property type="match status" value="1"/>
</dbReference>
<dbReference type="NCBIfam" id="NF006873">
    <property type="entry name" value="PRK09369.1"/>
    <property type="match status" value="1"/>
</dbReference>
<dbReference type="PANTHER" id="PTHR43783">
    <property type="entry name" value="UDP-N-ACETYLGLUCOSAMINE 1-CARBOXYVINYLTRANSFERASE"/>
    <property type="match status" value="1"/>
</dbReference>
<dbReference type="PANTHER" id="PTHR43783:SF1">
    <property type="entry name" value="UDP-N-ACETYLGLUCOSAMINE 1-CARBOXYVINYLTRANSFERASE"/>
    <property type="match status" value="1"/>
</dbReference>
<dbReference type="Pfam" id="PF00275">
    <property type="entry name" value="EPSP_synthase"/>
    <property type="match status" value="1"/>
</dbReference>
<dbReference type="SUPFAM" id="SSF55205">
    <property type="entry name" value="EPT/RTPC-like"/>
    <property type="match status" value="1"/>
</dbReference>
<gene>
    <name evidence="1" type="primary">murA</name>
    <name type="ordered locus">SFV_3219</name>
</gene>
<feature type="chain" id="PRO_1000023108" description="UDP-N-acetylglucosamine 1-carboxyvinyltransferase">
    <location>
        <begin position="1"/>
        <end position="419"/>
    </location>
</feature>
<feature type="active site" description="Proton donor" evidence="1">
    <location>
        <position position="115"/>
    </location>
</feature>
<feature type="binding site" evidence="1">
    <location>
        <begin position="22"/>
        <end position="23"/>
    </location>
    <ligand>
        <name>phosphoenolpyruvate</name>
        <dbReference type="ChEBI" id="CHEBI:58702"/>
    </ligand>
</feature>
<feature type="binding site" evidence="1">
    <location>
        <position position="91"/>
    </location>
    <ligand>
        <name>UDP-N-acetyl-alpha-D-glucosamine</name>
        <dbReference type="ChEBI" id="CHEBI:57705"/>
    </ligand>
</feature>
<feature type="binding site" evidence="1">
    <location>
        <begin position="120"/>
        <end position="124"/>
    </location>
    <ligand>
        <name>UDP-N-acetyl-alpha-D-glucosamine</name>
        <dbReference type="ChEBI" id="CHEBI:57705"/>
    </ligand>
</feature>
<feature type="binding site" evidence="1">
    <location>
        <begin position="160"/>
        <end position="163"/>
    </location>
    <ligand>
        <name>UDP-N-acetyl-alpha-D-glucosamine</name>
        <dbReference type="ChEBI" id="CHEBI:57705"/>
    </ligand>
</feature>
<feature type="binding site" evidence="1">
    <location>
        <position position="305"/>
    </location>
    <ligand>
        <name>UDP-N-acetyl-alpha-D-glucosamine</name>
        <dbReference type="ChEBI" id="CHEBI:57705"/>
    </ligand>
</feature>
<feature type="binding site" evidence="1">
    <location>
        <position position="327"/>
    </location>
    <ligand>
        <name>UDP-N-acetyl-alpha-D-glucosamine</name>
        <dbReference type="ChEBI" id="CHEBI:57705"/>
    </ligand>
</feature>
<feature type="modified residue" description="2-(S-cysteinyl)pyruvic acid O-phosphothioketal" evidence="1">
    <location>
        <position position="115"/>
    </location>
</feature>
<name>MURA_SHIF8</name>
<organism>
    <name type="scientific">Shigella flexneri serotype 5b (strain 8401)</name>
    <dbReference type="NCBI Taxonomy" id="373384"/>
    <lineage>
        <taxon>Bacteria</taxon>
        <taxon>Pseudomonadati</taxon>
        <taxon>Pseudomonadota</taxon>
        <taxon>Gammaproteobacteria</taxon>
        <taxon>Enterobacterales</taxon>
        <taxon>Enterobacteriaceae</taxon>
        <taxon>Shigella</taxon>
    </lineage>
</organism>
<evidence type="ECO:0000255" key="1">
    <source>
        <dbReference type="HAMAP-Rule" id="MF_00111"/>
    </source>
</evidence>
<sequence>MDKFRVQGPTKLQGEVTISGAKNAALPILFAALLAEEPVEIQNVPKLKDVDTSMKLLSQLGAKVERNGSVHIDARDVNVFCAPYDLVKTMRASIWALGPLVARFGQGQVSLPGGCTIGARPVDLHISGLEQLGATIKLEEGYVKASVDGRLKGAHIVMDKVSVGATVTIMCAATLAEGTTIIENAAREPEIVDTANFLITLGAKISGQGTDRIVIEGVERLGGGVYRVLPDRIETGTFLVAAAISRGKIICRNAQPDTLDAVLAKLRDAGADIEVGEDWISLDMHGKRPKAVNVRTAPHPAFPTDMQAQFTLLNLVAEGTGFITETVFENRFMHVPELSRMGAHAEIESNTVICHGVEKLSGAQVMATDLRASASLVLAGCIAEGTTVVDRIYHIDRGYERIEDKLRALGANIERVKGE</sequence>
<proteinExistence type="inferred from homology"/>